<accession>O94484</accession>
<accession>A0AAN2L457</accession>
<reference key="1">
    <citation type="journal article" date="2002" name="Nature">
        <title>The genome sequence of Schizosaccharomyces pombe.</title>
        <authorList>
            <person name="Wood V."/>
            <person name="Gwilliam R."/>
            <person name="Rajandream M.A."/>
            <person name="Lyne M.H."/>
            <person name="Lyne R."/>
            <person name="Stewart A."/>
            <person name="Sgouros J.G."/>
            <person name="Peat N."/>
            <person name="Hayles J."/>
            <person name="Baker S.G."/>
            <person name="Basham D."/>
            <person name="Bowman S."/>
            <person name="Brooks K."/>
            <person name="Brown D."/>
            <person name="Brown S."/>
            <person name="Chillingworth T."/>
            <person name="Churcher C.M."/>
            <person name="Collins M."/>
            <person name="Connor R."/>
            <person name="Cronin A."/>
            <person name="Davis P."/>
            <person name="Feltwell T."/>
            <person name="Fraser A."/>
            <person name="Gentles S."/>
            <person name="Goble A."/>
            <person name="Hamlin N."/>
            <person name="Harris D.E."/>
            <person name="Hidalgo J."/>
            <person name="Hodgson G."/>
            <person name="Holroyd S."/>
            <person name="Hornsby T."/>
            <person name="Howarth S."/>
            <person name="Huckle E.J."/>
            <person name="Hunt S."/>
            <person name="Jagels K."/>
            <person name="James K.D."/>
            <person name="Jones L."/>
            <person name="Jones M."/>
            <person name="Leather S."/>
            <person name="McDonald S."/>
            <person name="McLean J."/>
            <person name="Mooney P."/>
            <person name="Moule S."/>
            <person name="Mungall K.L."/>
            <person name="Murphy L.D."/>
            <person name="Niblett D."/>
            <person name="Odell C."/>
            <person name="Oliver K."/>
            <person name="O'Neil S."/>
            <person name="Pearson D."/>
            <person name="Quail M.A."/>
            <person name="Rabbinowitsch E."/>
            <person name="Rutherford K.M."/>
            <person name="Rutter S."/>
            <person name="Saunders D."/>
            <person name="Seeger K."/>
            <person name="Sharp S."/>
            <person name="Skelton J."/>
            <person name="Simmonds M.N."/>
            <person name="Squares R."/>
            <person name="Squares S."/>
            <person name="Stevens K."/>
            <person name="Taylor K."/>
            <person name="Taylor R.G."/>
            <person name="Tivey A."/>
            <person name="Walsh S.V."/>
            <person name="Warren T."/>
            <person name="Whitehead S."/>
            <person name="Woodward J.R."/>
            <person name="Volckaert G."/>
            <person name="Aert R."/>
            <person name="Robben J."/>
            <person name="Grymonprez B."/>
            <person name="Weltjens I."/>
            <person name="Vanstreels E."/>
            <person name="Rieger M."/>
            <person name="Schaefer M."/>
            <person name="Mueller-Auer S."/>
            <person name="Gabel C."/>
            <person name="Fuchs M."/>
            <person name="Duesterhoeft A."/>
            <person name="Fritzc C."/>
            <person name="Holzer E."/>
            <person name="Moestl D."/>
            <person name="Hilbert H."/>
            <person name="Borzym K."/>
            <person name="Langer I."/>
            <person name="Beck A."/>
            <person name="Lehrach H."/>
            <person name="Reinhardt R."/>
            <person name="Pohl T.M."/>
            <person name="Eger P."/>
            <person name="Zimmermann W."/>
            <person name="Wedler H."/>
            <person name="Wambutt R."/>
            <person name="Purnelle B."/>
            <person name="Goffeau A."/>
            <person name="Cadieu E."/>
            <person name="Dreano S."/>
            <person name="Gloux S."/>
            <person name="Lelaure V."/>
            <person name="Mottier S."/>
            <person name="Galibert F."/>
            <person name="Aves S.J."/>
            <person name="Xiang Z."/>
            <person name="Hunt C."/>
            <person name="Moore K."/>
            <person name="Hurst S.M."/>
            <person name="Lucas M."/>
            <person name="Rochet M."/>
            <person name="Gaillardin C."/>
            <person name="Tallada V.A."/>
            <person name="Garzon A."/>
            <person name="Thode G."/>
            <person name="Daga R.R."/>
            <person name="Cruzado L."/>
            <person name="Jimenez J."/>
            <person name="Sanchez M."/>
            <person name="del Rey F."/>
            <person name="Benito J."/>
            <person name="Dominguez A."/>
            <person name="Revuelta J.L."/>
            <person name="Moreno S."/>
            <person name="Armstrong J."/>
            <person name="Forsburg S.L."/>
            <person name="Cerutti L."/>
            <person name="Lowe T."/>
            <person name="McCombie W.R."/>
            <person name="Paulsen I."/>
            <person name="Potashkin J."/>
            <person name="Shpakovski G.V."/>
            <person name="Ussery D."/>
            <person name="Barrell B.G."/>
            <person name="Nurse P."/>
        </authorList>
    </citation>
    <scope>NUCLEOTIDE SEQUENCE [LARGE SCALE GENOMIC DNA]</scope>
    <source>
        <strain>972 / ATCC 24843</strain>
    </source>
</reference>
<reference key="2">
    <citation type="journal article" date="2014" name="Nat. Struct. Mol. Biol.">
        <title>The translational landscape of fission-yeast meiosis and sporulation.</title>
        <authorList>
            <person name="Duncan C.D."/>
            <person name="Mata J."/>
        </authorList>
    </citation>
    <scope>GENE MODEL REVISION</scope>
</reference>
<evidence type="ECO:0000312" key="1">
    <source>
        <dbReference type="PomBase" id="SPCC417.03"/>
    </source>
</evidence>
<protein>
    <recommendedName>
        <fullName>Uncharacterized protein SPCC417.03</fullName>
    </recommendedName>
</protein>
<keyword id="KW-1185">Reference proteome</keyword>
<dbReference type="EMBL" id="CU329672">
    <property type="protein sequence ID" value="CAK9841824.1"/>
    <property type="molecule type" value="Genomic_DNA"/>
</dbReference>
<dbReference type="PIR" id="T41338">
    <property type="entry name" value="T41338"/>
</dbReference>
<dbReference type="EnsemblFungi" id="SPCC417.03.1">
    <property type="protein sequence ID" value="SPCC417.03.1:pep"/>
    <property type="gene ID" value="SPCC417.03"/>
</dbReference>
<dbReference type="PomBase" id="SPCC417.03"/>
<dbReference type="VEuPathDB" id="FungiDB:SPCC417.03"/>
<dbReference type="InParanoid" id="O94484"/>
<dbReference type="PRO" id="PR:O94484"/>
<dbReference type="Proteomes" id="UP000002485">
    <property type="component" value="Chromosome III"/>
</dbReference>
<feature type="chain" id="PRO_0000116537" description="Uncharacterized protein SPCC417.03">
    <location>
        <begin position="1"/>
        <end position="56"/>
    </location>
</feature>
<gene>
    <name evidence="1" type="ORF">SPCC417.03</name>
</gene>
<sequence>MLPHTAFSNHIHYHFINEAPFRLCIYTLFHAHTCFSCGLSLSLMEVIMDISQLLIS</sequence>
<proteinExistence type="predicted"/>
<organism>
    <name type="scientific">Schizosaccharomyces pombe (strain 972 / ATCC 24843)</name>
    <name type="common">Fission yeast</name>
    <dbReference type="NCBI Taxonomy" id="284812"/>
    <lineage>
        <taxon>Eukaryota</taxon>
        <taxon>Fungi</taxon>
        <taxon>Dikarya</taxon>
        <taxon>Ascomycota</taxon>
        <taxon>Taphrinomycotina</taxon>
        <taxon>Schizosaccharomycetes</taxon>
        <taxon>Schizosaccharomycetales</taxon>
        <taxon>Schizosaccharomycetaceae</taxon>
        <taxon>Schizosaccharomyces</taxon>
    </lineage>
</organism>
<name>YC73_SCHPO</name>